<name>ARLY_SALEP</name>
<accession>B5QXQ5</accession>
<keyword id="KW-0028">Amino-acid biosynthesis</keyword>
<keyword id="KW-0055">Arginine biosynthesis</keyword>
<keyword id="KW-0963">Cytoplasm</keyword>
<keyword id="KW-0456">Lyase</keyword>
<reference key="1">
    <citation type="journal article" date="2008" name="Genome Res.">
        <title>Comparative genome analysis of Salmonella enteritidis PT4 and Salmonella gallinarum 287/91 provides insights into evolutionary and host adaptation pathways.</title>
        <authorList>
            <person name="Thomson N.R."/>
            <person name="Clayton D.J."/>
            <person name="Windhorst D."/>
            <person name="Vernikos G."/>
            <person name="Davidson S."/>
            <person name="Churcher C."/>
            <person name="Quail M.A."/>
            <person name="Stevens M."/>
            <person name="Jones M.A."/>
            <person name="Watson M."/>
            <person name="Barron A."/>
            <person name="Layton A."/>
            <person name="Pickard D."/>
            <person name="Kingsley R.A."/>
            <person name="Bignell A."/>
            <person name="Clark L."/>
            <person name="Harris B."/>
            <person name="Ormond D."/>
            <person name="Abdellah Z."/>
            <person name="Brooks K."/>
            <person name="Cherevach I."/>
            <person name="Chillingworth T."/>
            <person name="Woodward J."/>
            <person name="Norberczak H."/>
            <person name="Lord A."/>
            <person name="Arrowsmith C."/>
            <person name="Jagels K."/>
            <person name="Moule S."/>
            <person name="Mungall K."/>
            <person name="Saunders M."/>
            <person name="Whitehead S."/>
            <person name="Chabalgoity J.A."/>
            <person name="Maskell D."/>
            <person name="Humphreys T."/>
            <person name="Roberts M."/>
            <person name="Barrow P.A."/>
            <person name="Dougan G."/>
            <person name="Parkhill J."/>
        </authorList>
    </citation>
    <scope>NUCLEOTIDE SEQUENCE [LARGE SCALE GENOMIC DNA]</scope>
    <source>
        <strain>P125109</strain>
    </source>
</reference>
<organism>
    <name type="scientific">Salmonella enteritidis PT4 (strain P125109)</name>
    <dbReference type="NCBI Taxonomy" id="550537"/>
    <lineage>
        <taxon>Bacteria</taxon>
        <taxon>Pseudomonadati</taxon>
        <taxon>Pseudomonadota</taxon>
        <taxon>Gammaproteobacteria</taxon>
        <taxon>Enterobacterales</taxon>
        <taxon>Enterobacteriaceae</taxon>
        <taxon>Salmonella</taxon>
    </lineage>
</organism>
<comment type="catalytic activity">
    <reaction evidence="1">
        <text>2-(N(omega)-L-arginino)succinate = fumarate + L-arginine</text>
        <dbReference type="Rhea" id="RHEA:24020"/>
        <dbReference type="ChEBI" id="CHEBI:29806"/>
        <dbReference type="ChEBI" id="CHEBI:32682"/>
        <dbReference type="ChEBI" id="CHEBI:57472"/>
        <dbReference type="EC" id="4.3.2.1"/>
    </reaction>
</comment>
<comment type="pathway">
    <text evidence="1">Amino-acid biosynthesis; L-arginine biosynthesis; L-arginine from L-ornithine and carbamoyl phosphate: step 3/3.</text>
</comment>
<comment type="subcellular location">
    <subcellularLocation>
        <location evidence="1">Cytoplasm</location>
    </subcellularLocation>
</comment>
<comment type="similarity">
    <text evidence="1">Belongs to the lyase 1 family. Argininosuccinate lyase subfamily.</text>
</comment>
<protein>
    <recommendedName>
        <fullName evidence="1">Argininosuccinate lyase</fullName>
        <shortName evidence="1">ASAL</shortName>
        <ecNumber evidence="1">4.3.2.1</ecNumber>
    </recommendedName>
    <alternativeName>
        <fullName evidence="1">Arginosuccinase</fullName>
    </alternativeName>
</protein>
<sequence length="458" mass="50523">MALWGGRFTQAADQRFKQFNDSLRFDYRLAEQDIVGSVAWSKALVTVGVLTADEQRQLEEALNVLLEEVRVNPQQILQSDAEDIHSWVEGKLIDKVGQLGKKLHTGRSRNDQVATDLKLWCKETVRELLTANRQLQSALVETAQANQDAVMPGYTHLQRAQPVTFAHWCLAYVEMLARDESRLQDTLKRLDVSPLGCGALAGTAYEIDREQLAGWLGFASATRNSLDSVSDRDHVLELLSDAAIGMVHLSRFAEDLIFFNSGEAGFVELSDRVTSGSSLMPQKKNPDALELIRGKCGRVQGALTGMMMTLKGLPLAYNKDMQEDKEGLFDALDTWLDCLHMAALVLDGIQVKRPRCQDAAQQGYANATELADYLVAKGVPFREAHHIVGEAVVEAIRQGKPLEALPLADLQKFSHVIGDDVYPMLSLQSCLDKRAAKGGVSPQQVAQAIDDARARLAL</sequence>
<dbReference type="EC" id="4.3.2.1" evidence="1"/>
<dbReference type="EMBL" id="AM933172">
    <property type="protein sequence ID" value="CAR35490.1"/>
    <property type="molecule type" value="Genomic_DNA"/>
</dbReference>
<dbReference type="RefSeq" id="WP_001230062.1">
    <property type="nucleotide sequence ID" value="NC_011294.1"/>
</dbReference>
<dbReference type="SMR" id="B5QXQ5"/>
<dbReference type="KEGG" id="set:SEN3918"/>
<dbReference type="HOGENOM" id="CLU_027272_2_3_6"/>
<dbReference type="UniPathway" id="UPA00068">
    <property type="reaction ID" value="UER00114"/>
</dbReference>
<dbReference type="Proteomes" id="UP000000613">
    <property type="component" value="Chromosome"/>
</dbReference>
<dbReference type="GO" id="GO:0005829">
    <property type="term" value="C:cytosol"/>
    <property type="evidence" value="ECO:0007669"/>
    <property type="project" value="TreeGrafter"/>
</dbReference>
<dbReference type="GO" id="GO:0004056">
    <property type="term" value="F:argininosuccinate lyase activity"/>
    <property type="evidence" value="ECO:0007669"/>
    <property type="project" value="UniProtKB-UniRule"/>
</dbReference>
<dbReference type="GO" id="GO:0042450">
    <property type="term" value="P:arginine biosynthetic process via ornithine"/>
    <property type="evidence" value="ECO:0007669"/>
    <property type="project" value="InterPro"/>
</dbReference>
<dbReference type="GO" id="GO:0006526">
    <property type="term" value="P:L-arginine biosynthetic process"/>
    <property type="evidence" value="ECO:0007669"/>
    <property type="project" value="UniProtKB-UniRule"/>
</dbReference>
<dbReference type="CDD" id="cd01359">
    <property type="entry name" value="Argininosuccinate_lyase"/>
    <property type="match status" value="1"/>
</dbReference>
<dbReference type="FunFam" id="1.10.275.10:FF:000004">
    <property type="entry name" value="Argininosuccinate lyase"/>
    <property type="match status" value="1"/>
</dbReference>
<dbReference type="FunFam" id="1.10.40.30:FF:000001">
    <property type="entry name" value="Argininosuccinate lyase"/>
    <property type="match status" value="1"/>
</dbReference>
<dbReference type="FunFam" id="1.20.200.10:FF:000006">
    <property type="entry name" value="Argininosuccinate lyase"/>
    <property type="match status" value="1"/>
</dbReference>
<dbReference type="Gene3D" id="1.10.40.30">
    <property type="entry name" value="Fumarase/aspartase (C-terminal domain)"/>
    <property type="match status" value="1"/>
</dbReference>
<dbReference type="Gene3D" id="1.20.200.10">
    <property type="entry name" value="Fumarase/aspartase (Central domain)"/>
    <property type="match status" value="1"/>
</dbReference>
<dbReference type="Gene3D" id="1.10.275.10">
    <property type="entry name" value="Fumarase/aspartase (N-terminal domain)"/>
    <property type="match status" value="1"/>
</dbReference>
<dbReference type="HAMAP" id="MF_00006">
    <property type="entry name" value="Arg_succ_lyase"/>
    <property type="match status" value="1"/>
</dbReference>
<dbReference type="InterPro" id="IPR029419">
    <property type="entry name" value="Arg_succ_lyase_C"/>
</dbReference>
<dbReference type="InterPro" id="IPR009049">
    <property type="entry name" value="Argininosuccinate_lyase"/>
</dbReference>
<dbReference type="InterPro" id="IPR024083">
    <property type="entry name" value="Fumarase/histidase_N"/>
</dbReference>
<dbReference type="InterPro" id="IPR020557">
    <property type="entry name" value="Fumarate_lyase_CS"/>
</dbReference>
<dbReference type="InterPro" id="IPR000362">
    <property type="entry name" value="Fumarate_lyase_fam"/>
</dbReference>
<dbReference type="InterPro" id="IPR022761">
    <property type="entry name" value="Fumarate_lyase_N"/>
</dbReference>
<dbReference type="InterPro" id="IPR008948">
    <property type="entry name" value="L-Aspartase-like"/>
</dbReference>
<dbReference type="NCBIfam" id="TIGR00838">
    <property type="entry name" value="argH"/>
    <property type="match status" value="1"/>
</dbReference>
<dbReference type="NCBIfam" id="NF008964">
    <property type="entry name" value="PRK12308.1"/>
    <property type="match status" value="1"/>
</dbReference>
<dbReference type="PANTHER" id="PTHR43814">
    <property type="entry name" value="ARGININOSUCCINATE LYASE"/>
    <property type="match status" value="1"/>
</dbReference>
<dbReference type="PANTHER" id="PTHR43814:SF1">
    <property type="entry name" value="ARGININOSUCCINATE LYASE"/>
    <property type="match status" value="1"/>
</dbReference>
<dbReference type="Pfam" id="PF14698">
    <property type="entry name" value="ASL_C2"/>
    <property type="match status" value="1"/>
</dbReference>
<dbReference type="Pfam" id="PF00206">
    <property type="entry name" value="Lyase_1"/>
    <property type="match status" value="1"/>
</dbReference>
<dbReference type="PRINTS" id="PR00145">
    <property type="entry name" value="ARGSUCLYASE"/>
</dbReference>
<dbReference type="PRINTS" id="PR00149">
    <property type="entry name" value="FUMRATELYASE"/>
</dbReference>
<dbReference type="SUPFAM" id="SSF48557">
    <property type="entry name" value="L-aspartase-like"/>
    <property type="match status" value="1"/>
</dbReference>
<dbReference type="PROSITE" id="PS00163">
    <property type="entry name" value="FUMARATE_LYASES"/>
    <property type="match status" value="1"/>
</dbReference>
<proteinExistence type="inferred from homology"/>
<gene>
    <name evidence="1" type="primary">argH</name>
    <name type="ordered locus">SEN3918</name>
</gene>
<feature type="chain" id="PRO_1000089111" description="Argininosuccinate lyase">
    <location>
        <begin position="1"/>
        <end position="458"/>
    </location>
</feature>
<evidence type="ECO:0000255" key="1">
    <source>
        <dbReference type="HAMAP-Rule" id="MF_00006"/>
    </source>
</evidence>